<feature type="chain" id="PRO_0000077689" description="Mu-like prophage FluMu tail tube protein">
    <location>
        <begin position="1"/>
        <end position="118"/>
    </location>
</feature>
<feature type="region of interest" description="Disordered" evidence="1">
    <location>
        <begin position="12"/>
        <end position="32"/>
    </location>
</feature>
<reference key="1">
    <citation type="journal article" date="1995" name="Science">
        <title>Whole-genome random sequencing and assembly of Haemophilus influenzae Rd.</title>
        <authorList>
            <person name="Fleischmann R.D."/>
            <person name="Adams M.D."/>
            <person name="White O."/>
            <person name="Clayton R.A."/>
            <person name="Kirkness E.F."/>
            <person name="Kerlavage A.R."/>
            <person name="Bult C.J."/>
            <person name="Tomb J.-F."/>
            <person name="Dougherty B.A."/>
            <person name="Merrick J.M."/>
            <person name="McKenney K."/>
            <person name="Sutton G.G."/>
            <person name="FitzHugh W."/>
            <person name="Fields C.A."/>
            <person name="Gocayne J.D."/>
            <person name="Scott J.D."/>
            <person name="Shirley R."/>
            <person name="Liu L.-I."/>
            <person name="Glodek A."/>
            <person name="Kelley J.M."/>
            <person name="Weidman J.F."/>
            <person name="Phillips C.A."/>
            <person name="Spriggs T."/>
            <person name="Hedblom E."/>
            <person name="Cotton M.D."/>
            <person name="Utterback T.R."/>
            <person name="Hanna M.C."/>
            <person name="Nguyen D.T."/>
            <person name="Saudek D.M."/>
            <person name="Brandon R.C."/>
            <person name="Fine L.D."/>
            <person name="Fritchman J.L."/>
            <person name="Fuhrmann J.L."/>
            <person name="Geoghagen N.S.M."/>
            <person name="Gnehm C.L."/>
            <person name="McDonald L.A."/>
            <person name="Small K.V."/>
            <person name="Fraser C.M."/>
            <person name="Smith H.O."/>
            <person name="Venter J.C."/>
        </authorList>
    </citation>
    <scope>NUCLEOTIDE SEQUENCE [LARGE SCALE GENOMIC DNA]</scope>
    <source>
        <strain>ATCC 51907 / DSM 11121 / KW20 / Rd</strain>
    </source>
</reference>
<organism>
    <name type="scientific">Haemophilus influenzae (strain ATCC 51907 / DSM 11121 / KW20 / Rd)</name>
    <dbReference type="NCBI Taxonomy" id="71421"/>
    <lineage>
        <taxon>Bacteria</taxon>
        <taxon>Pseudomonadati</taxon>
        <taxon>Pseudomonadota</taxon>
        <taxon>Gammaproteobacteria</taxon>
        <taxon>Pasteurellales</taxon>
        <taxon>Pasteurellaceae</taxon>
        <taxon>Haemophilus</taxon>
    </lineage>
</organism>
<keyword id="KW-1185">Reference proteome</keyword>
<comment type="similarity">
    <text evidence="2">To phage Mu protein M.</text>
</comment>
<evidence type="ECO:0000256" key="1">
    <source>
        <dbReference type="SAM" id="MobiDB-lite"/>
    </source>
</evidence>
<evidence type="ECO:0000305" key="2"/>
<name>VPM_HAEIN</name>
<gene>
    <name type="ordered locus">HI_1512</name>
</gene>
<proteinExistence type="predicted"/>
<accession>P44234</accession>
<dbReference type="EMBL" id="L42023">
    <property type="protein sequence ID" value="AAC23159.1"/>
    <property type="molecule type" value="Genomic_DNA"/>
</dbReference>
<dbReference type="PIR" id="A64034">
    <property type="entry name" value="A64034"/>
</dbReference>
<dbReference type="RefSeq" id="NP_439662.1">
    <property type="nucleotide sequence ID" value="NC_000907.1"/>
</dbReference>
<dbReference type="STRING" id="71421.HI_1512"/>
<dbReference type="EnsemblBacteria" id="AAC23159">
    <property type="protein sequence ID" value="AAC23159"/>
    <property type="gene ID" value="HI_1512"/>
</dbReference>
<dbReference type="KEGG" id="hin:HI_1512"/>
<dbReference type="PATRIC" id="fig|71421.8.peg.1582"/>
<dbReference type="eggNOG" id="ENOG5033A4X">
    <property type="taxonomic scope" value="Bacteria"/>
</dbReference>
<dbReference type="HOGENOM" id="CLU_166707_0_0_6"/>
<dbReference type="OrthoDB" id="6399698at2"/>
<dbReference type="BioCyc" id="HINF71421:G1GJ1-1535-MONOMER"/>
<dbReference type="Proteomes" id="UP000000579">
    <property type="component" value="Chromosome"/>
</dbReference>
<dbReference type="InterPro" id="IPR019596">
    <property type="entry name" value="Phage_Mu_GpM_tail_tub"/>
</dbReference>
<dbReference type="Pfam" id="PF10618">
    <property type="entry name" value="Tail_tube"/>
    <property type="match status" value="1"/>
</dbReference>
<protein>
    <recommendedName>
        <fullName>Mu-like prophage FluMu tail tube protein</fullName>
    </recommendedName>
</protein>
<sequence length="118" mass="12911">MATQFQGSAIIRLNGKEWPSDNDGTLTPGGKERETVKGSRVYGFSEKPTEAMVECTVFNCAETDVMELQNITNATVEFETDIGQVYLLPGAWTVETGTLSADGKIKLKMASIECKRVQ</sequence>